<feature type="chain" id="PRO_1000005064" description="Large ribosomal subunit protein bL32">
    <location>
        <begin position="1"/>
        <end position="63"/>
    </location>
</feature>
<feature type="region of interest" description="Disordered" evidence="2">
    <location>
        <begin position="1"/>
        <end position="45"/>
    </location>
</feature>
<feature type="compositionally biased region" description="Basic residues" evidence="2">
    <location>
        <begin position="7"/>
        <end position="16"/>
    </location>
</feature>
<feature type="compositionally biased region" description="Polar residues" evidence="2">
    <location>
        <begin position="25"/>
        <end position="35"/>
    </location>
</feature>
<dbReference type="EMBL" id="CP000675">
    <property type="protein sequence ID" value="ABQ54783.1"/>
    <property type="molecule type" value="Genomic_DNA"/>
</dbReference>
<dbReference type="RefSeq" id="WP_010947121.1">
    <property type="nucleotide sequence ID" value="NZ_JAPMSS010000002.1"/>
</dbReference>
<dbReference type="SMR" id="A5IBN3"/>
<dbReference type="GeneID" id="57035381"/>
<dbReference type="KEGG" id="lpc:LPC_0807"/>
<dbReference type="HOGENOM" id="CLU_129084_2_1_6"/>
<dbReference type="GO" id="GO:0015934">
    <property type="term" value="C:large ribosomal subunit"/>
    <property type="evidence" value="ECO:0007669"/>
    <property type="project" value="InterPro"/>
</dbReference>
<dbReference type="GO" id="GO:0003735">
    <property type="term" value="F:structural constituent of ribosome"/>
    <property type="evidence" value="ECO:0007669"/>
    <property type="project" value="InterPro"/>
</dbReference>
<dbReference type="GO" id="GO:0006412">
    <property type="term" value="P:translation"/>
    <property type="evidence" value="ECO:0007669"/>
    <property type="project" value="UniProtKB-UniRule"/>
</dbReference>
<dbReference type="HAMAP" id="MF_00340">
    <property type="entry name" value="Ribosomal_bL32"/>
    <property type="match status" value="1"/>
</dbReference>
<dbReference type="InterPro" id="IPR002677">
    <property type="entry name" value="Ribosomal_bL32"/>
</dbReference>
<dbReference type="InterPro" id="IPR044957">
    <property type="entry name" value="Ribosomal_bL32_bact"/>
</dbReference>
<dbReference type="InterPro" id="IPR011332">
    <property type="entry name" value="Ribosomal_zn-bd"/>
</dbReference>
<dbReference type="NCBIfam" id="TIGR01031">
    <property type="entry name" value="rpmF_bact"/>
    <property type="match status" value="1"/>
</dbReference>
<dbReference type="PANTHER" id="PTHR35534">
    <property type="entry name" value="50S RIBOSOMAL PROTEIN L32"/>
    <property type="match status" value="1"/>
</dbReference>
<dbReference type="PANTHER" id="PTHR35534:SF1">
    <property type="entry name" value="LARGE RIBOSOMAL SUBUNIT PROTEIN BL32"/>
    <property type="match status" value="1"/>
</dbReference>
<dbReference type="Pfam" id="PF01783">
    <property type="entry name" value="Ribosomal_L32p"/>
    <property type="match status" value="1"/>
</dbReference>
<dbReference type="SUPFAM" id="SSF57829">
    <property type="entry name" value="Zn-binding ribosomal proteins"/>
    <property type="match status" value="1"/>
</dbReference>
<reference key="1">
    <citation type="submission" date="2006-11" db="EMBL/GenBank/DDBJ databases">
        <title>Identification and characterization of a new conjugation/ type IVA secretion system (trb/tra) of L. pneumophila Corby localized on a mobile genomic island.</title>
        <authorList>
            <person name="Gloeckner G."/>
            <person name="Albert-Weissenberger C."/>
            <person name="Weinmann E."/>
            <person name="Jacobi S."/>
            <person name="Schunder E."/>
            <person name="Steinert M."/>
            <person name="Buchrieser C."/>
            <person name="Hacker J."/>
            <person name="Heuner K."/>
        </authorList>
    </citation>
    <scope>NUCLEOTIDE SEQUENCE [LARGE SCALE GENOMIC DNA]</scope>
    <source>
        <strain>Corby</strain>
    </source>
</reference>
<keyword id="KW-0687">Ribonucleoprotein</keyword>
<keyword id="KW-0689">Ribosomal protein</keyword>
<sequence>MAVQQNKKSRSRRDMRRSHDALTKPTLSVDPTTGETHLRHHMTPDGYYRGKKIIDAETAYEQE</sequence>
<organism>
    <name type="scientific">Legionella pneumophila (strain Corby)</name>
    <dbReference type="NCBI Taxonomy" id="400673"/>
    <lineage>
        <taxon>Bacteria</taxon>
        <taxon>Pseudomonadati</taxon>
        <taxon>Pseudomonadota</taxon>
        <taxon>Gammaproteobacteria</taxon>
        <taxon>Legionellales</taxon>
        <taxon>Legionellaceae</taxon>
        <taxon>Legionella</taxon>
    </lineage>
</organism>
<gene>
    <name evidence="1" type="primary">rpmF</name>
    <name type="ordered locus">LPC_0807</name>
</gene>
<accession>A5IBN3</accession>
<protein>
    <recommendedName>
        <fullName evidence="1">Large ribosomal subunit protein bL32</fullName>
    </recommendedName>
    <alternativeName>
        <fullName evidence="3">50S ribosomal protein L32</fullName>
    </alternativeName>
</protein>
<name>RL32_LEGPC</name>
<proteinExistence type="inferred from homology"/>
<evidence type="ECO:0000255" key="1">
    <source>
        <dbReference type="HAMAP-Rule" id="MF_00340"/>
    </source>
</evidence>
<evidence type="ECO:0000256" key="2">
    <source>
        <dbReference type="SAM" id="MobiDB-lite"/>
    </source>
</evidence>
<evidence type="ECO:0000305" key="3"/>
<comment type="similarity">
    <text evidence="1">Belongs to the bacterial ribosomal protein bL32 family.</text>
</comment>